<feature type="chain" id="PRO_1000215461" description="UPF0354 protein GWCH70_2742">
    <location>
        <begin position="1"/>
        <end position="265"/>
    </location>
</feature>
<gene>
    <name type="ordered locus">GWCH70_2742</name>
</gene>
<organism>
    <name type="scientific">Geobacillus sp. (strain WCH70)</name>
    <dbReference type="NCBI Taxonomy" id="471223"/>
    <lineage>
        <taxon>Bacteria</taxon>
        <taxon>Bacillati</taxon>
        <taxon>Bacillota</taxon>
        <taxon>Bacilli</taxon>
        <taxon>Bacillales</taxon>
        <taxon>Anoxybacillaceae</taxon>
        <taxon>Geobacillus</taxon>
    </lineage>
</organism>
<comment type="similarity">
    <text evidence="1">Belongs to the UPF0354 family.</text>
</comment>
<reference key="1">
    <citation type="submission" date="2009-06" db="EMBL/GenBank/DDBJ databases">
        <title>Complete sequence of chromosome of Geopacillus sp. WCH70.</title>
        <authorList>
            <consortium name="US DOE Joint Genome Institute"/>
            <person name="Lucas S."/>
            <person name="Copeland A."/>
            <person name="Lapidus A."/>
            <person name="Glavina del Rio T."/>
            <person name="Dalin E."/>
            <person name="Tice H."/>
            <person name="Bruce D."/>
            <person name="Goodwin L."/>
            <person name="Pitluck S."/>
            <person name="Chertkov O."/>
            <person name="Brettin T."/>
            <person name="Detter J.C."/>
            <person name="Han C."/>
            <person name="Larimer F."/>
            <person name="Land M."/>
            <person name="Hauser L."/>
            <person name="Kyrpides N."/>
            <person name="Mikhailova N."/>
            <person name="Brumm P."/>
            <person name="Mead D.A."/>
            <person name="Richardson P."/>
        </authorList>
    </citation>
    <scope>NUCLEOTIDE SEQUENCE [LARGE SCALE GENOMIC DNA]</scope>
    <source>
        <strain>WCH70</strain>
    </source>
</reference>
<evidence type="ECO:0000255" key="1">
    <source>
        <dbReference type="HAMAP-Rule" id="MF_01548"/>
    </source>
</evidence>
<sequence length="265" mass="30875">MDSKQMCEEIKKRLARDDWTFQFDRKKDTLRIEDKETKKGVTISLPGVIAKWYEQKDEAVDEIVYYVEQALNTMHEKHTLSGKEKDIYPVIRSTSFPTETKEGIPLLYDEHTAETRIYYALDLGNTYRLIDKKMMEQEQWNEERIKEIARFNVRSLDVHVKEDKVAGNTFYFVNTNDGYDASRILNEPFLAKMKKKITGTMALAVPHQDVLIIADLQNEVGYDVLAQMTMSFFASGRVPITALSFLYEDGELEPIFILGKNYRKK</sequence>
<name>Y2742_GEOSW</name>
<accession>C5D6B6</accession>
<proteinExistence type="inferred from homology"/>
<dbReference type="EMBL" id="CP001638">
    <property type="protein sequence ID" value="ACS25432.1"/>
    <property type="molecule type" value="Genomic_DNA"/>
</dbReference>
<dbReference type="STRING" id="471223.GWCH70_2742"/>
<dbReference type="KEGG" id="gwc:GWCH70_2742"/>
<dbReference type="eggNOG" id="COG4848">
    <property type="taxonomic scope" value="Bacteria"/>
</dbReference>
<dbReference type="HOGENOM" id="CLU_085634_0_0_9"/>
<dbReference type="OrthoDB" id="154553at2"/>
<dbReference type="HAMAP" id="MF_01548">
    <property type="entry name" value="UPF0354"/>
    <property type="match status" value="1"/>
</dbReference>
<dbReference type="InterPro" id="IPR010838">
    <property type="entry name" value="DUF1444"/>
</dbReference>
<dbReference type="NCBIfam" id="NF010189">
    <property type="entry name" value="PRK13668.1"/>
    <property type="match status" value="1"/>
</dbReference>
<dbReference type="Pfam" id="PF07285">
    <property type="entry name" value="DUF1444"/>
    <property type="match status" value="1"/>
</dbReference>
<dbReference type="PIRSF" id="PIRSF012562">
    <property type="entry name" value="UCP012562"/>
    <property type="match status" value="1"/>
</dbReference>
<protein>
    <recommendedName>
        <fullName evidence="1">UPF0354 protein GWCH70_2742</fullName>
    </recommendedName>
</protein>